<reference key="1">
    <citation type="journal article" date="1998" name="Nature">
        <title>Deciphering the biology of Mycobacterium tuberculosis from the complete genome sequence.</title>
        <authorList>
            <person name="Cole S.T."/>
            <person name="Brosch R."/>
            <person name="Parkhill J."/>
            <person name="Garnier T."/>
            <person name="Churcher C.M."/>
            <person name="Harris D.E."/>
            <person name="Gordon S.V."/>
            <person name="Eiglmeier K."/>
            <person name="Gas S."/>
            <person name="Barry C.E. III"/>
            <person name="Tekaia F."/>
            <person name="Badcock K."/>
            <person name="Basham D."/>
            <person name="Brown D."/>
            <person name="Chillingworth T."/>
            <person name="Connor R."/>
            <person name="Davies R.M."/>
            <person name="Devlin K."/>
            <person name="Feltwell T."/>
            <person name="Gentles S."/>
            <person name="Hamlin N."/>
            <person name="Holroyd S."/>
            <person name="Hornsby T."/>
            <person name="Jagels K."/>
            <person name="Krogh A."/>
            <person name="McLean J."/>
            <person name="Moule S."/>
            <person name="Murphy L.D."/>
            <person name="Oliver S."/>
            <person name="Osborne J."/>
            <person name="Quail M.A."/>
            <person name="Rajandream M.A."/>
            <person name="Rogers J."/>
            <person name="Rutter S."/>
            <person name="Seeger K."/>
            <person name="Skelton S."/>
            <person name="Squares S."/>
            <person name="Squares R."/>
            <person name="Sulston J.E."/>
            <person name="Taylor K."/>
            <person name="Whitehead S."/>
            <person name="Barrell B.G."/>
        </authorList>
    </citation>
    <scope>NUCLEOTIDE SEQUENCE [LARGE SCALE GENOMIC DNA]</scope>
    <source>
        <strain>ATCC 25618 / H37Rv</strain>
    </source>
</reference>
<reference key="2">
    <citation type="journal article" date="2008" name="BMC Syst. Biol.">
        <title>targetTB: a target identification pipeline for Mycobacterium tuberculosis through an interactome, reactome and genome-scale structural analysis.</title>
        <authorList>
            <person name="Raman K."/>
            <person name="Yeturu K."/>
            <person name="Chandra N."/>
        </authorList>
    </citation>
    <scope>IDENTIFICATION AS A DRUG TARGET [LARGE SCALE ANALYSIS]</scope>
</reference>
<reference key="3">
    <citation type="journal article" date="2011" name="Mol. Cell. Proteomics">
        <title>Proteogenomic analysis of Mycobacterium tuberculosis by high resolution mass spectrometry.</title>
        <authorList>
            <person name="Kelkar D.S."/>
            <person name="Kumar D."/>
            <person name="Kumar P."/>
            <person name="Balakrishnan L."/>
            <person name="Muthusamy B."/>
            <person name="Yadav A.K."/>
            <person name="Shrivastava P."/>
            <person name="Marimuthu A."/>
            <person name="Anand S."/>
            <person name="Sundaram H."/>
            <person name="Kingsbury R."/>
            <person name="Harsha H.C."/>
            <person name="Nair B."/>
            <person name="Prasad T.S."/>
            <person name="Chauhan D.S."/>
            <person name="Katoch K."/>
            <person name="Katoch V.M."/>
            <person name="Kumar P."/>
            <person name="Chaerkady R."/>
            <person name="Ramachandran S."/>
            <person name="Dash D."/>
            <person name="Pandey A."/>
        </authorList>
    </citation>
    <scope>IDENTIFICATION BY MASS SPECTROMETRY [LARGE SCALE ANALYSIS]</scope>
    <source>
        <strain>ATCC 25618 / H37Rv</strain>
    </source>
</reference>
<reference evidence="5 6" key="4">
    <citation type="journal article" date="2018" name="FEBS J.">
        <title>Characteristics of the essential pathogenicity factor Rv1828, a MerR family transcription regulator from Mycobacterium tuberculosis.</title>
        <authorList>
            <person name="Singh S."/>
            <person name="Sevalkar R.R."/>
            <person name="Sarkar D."/>
            <person name="Karthikeyan S."/>
        </authorList>
    </citation>
    <scope>X-RAY CRYSTALLOGRAPHY (1.50 ANGSTROMS) OF 127-247</scope>
    <scope>FUNCTION</scope>
    <scope>DNA-BINDING</scope>
    <scope>SUBUNIT</scope>
    <scope>INDUCTION</scope>
    <scope>DOMAIN</scope>
</reference>
<keyword id="KW-0002">3D-structure</keyword>
<keyword id="KW-0238">DNA-binding</keyword>
<keyword id="KW-1185">Reference proteome</keyword>
<keyword id="KW-0804">Transcription</keyword>
<keyword id="KW-0805">Transcription regulation</keyword>
<evidence type="ECO:0000255" key="1">
    <source>
        <dbReference type="PROSITE-ProRule" id="PRU00254"/>
    </source>
</evidence>
<evidence type="ECO:0000269" key="2">
    <source>
    </source>
</evidence>
<evidence type="ECO:0000269" key="3">
    <source>
    </source>
</evidence>
<evidence type="ECO:0000305" key="4"/>
<evidence type="ECO:0007744" key="5">
    <source>
        <dbReference type="PDB" id="5YDC"/>
    </source>
</evidence>
<evidence type="ECO:0007744" key="6">
    <source>
        <dbReference type="PDB" id="5YDD"/>
    </source>
</evidence>
<evidence type="ECO:0007829" key="7">
    <source>
        <dbReference type="PDB" id="5YDD"/>
    </source>
</evidence>
<dbReference type="EMBL" id="AL123456">
    <property type="protein sequence ID" value="CCP44594.1"/>
    <property type="molecule type" value="Genomic_DNA"/>
</dbReference>
<dbReference type="PIR" id="E70721">
    <property type="entry name" value="E70721"/>
</dbReference>
<dbReference type="RefSeq" id="NP_216344.1">
    <property type="nucleotide sequence ID" value="NC_000962.3"/>
</dbReference>
<dbReference type="RefSeq" id="WP_003409239.1">
    <property type="nucleotide sequence ID" value="NZ_NVQJ01000013.1"/>
</dbReference>
<dbReference type="PDB" id="5YDC">
    <property type="method" value="X-ray"/>
    <property type="resolution" value="1.91 A"/>
    <property type="chains" value="A/B=127-247"/>
</dbReference>
<dbReference type="PDB" id="5YDD">
    <property type="method" value="X-ray"/>
    <property type="resolution" value="1.50 A"/>
    <property type="chains" value="A/B=127-247"/>
</dbReference>
<dbReference type="PDBsum" id="5YDC"/>
<dbReference type="PDBsum" id="5YDD"/>
<dbReference type="SMR" id="P9WME7"/>
<dbReference type="STRING" id="83332.Rv1828"/>
<dbReference type="PaxDb" id="83332-Rv1828"/>
<dbReference type="DNASU" id="885336"/>
<dbReference type="GeneID" id="885336"/>
<dbReference type="KEGG" id="mtu:Rv1828"/>
<dbReference type="KEGG" id="mtv:RVBD_1828"/>
<dbReference type="TubercuList" id="Rv1828"/>
<dbReference type="eggNOG" id="COG0789">
    <property type="taxonomic scope" value="Bacteria"/>
</dbReference>
<dbReference type="InParanoid" id="P9WME7"/>
<dbReference type="OrthoDB" id="3191171at2"/>
<dbReference type="PhylomeDB" id="P9WME7"/>
<dbReference type="Proteomes" id="UP000001584">
    <property type="component" value="Chromosome"/>
</dbReference>
<dbReference type="GO" id="GO:0005829">
    <property type="term" value="C:cytosol"/>
    <property type="evidence" value="ECO:0007005"/>
    <property type="project" value="MTBBASE"/>
</dbReference>
<dbReference type="GO" id="GO:0003677">
    <property type="term" value="F:DNA binding"/>
    <property type="evidence" value="ECO:0007669"/>
    <property type="project" value="UniProtKB-KW"/>
</dbReference>
<dbReference type="GO" id="GO:0003700">
    <property type="term" value="F:DNA-binding transcription factor activity"/>
    <property type="evidence" value="ECO:0000318"/>
    <property type="project" value="GO_Central"/>
</dbReference>
<dbReference type="GO" id="GO:0006355">
    <property type="term" value="P:regulation of DNA-templated transcription"/>
    <property type="evidence" value="ECO:0000318"/>
    <property type="project" value="GO_Central"/>
</dbReference>
<dbReference type="CDD" id="cd00592">
    <property type="entry name" value="HTH_MerR-like"/>
    <property type="match status" value="1"/>
</dbReference>
<dbReference type="FunFam" id="1.10.1660.10:FF:000011">
    <property type="entry name" value="MerR family transcriptional regulator"/>
    <property type="match status" value="1"/>
</dbReference>
<dbReference type="Gene3D" id="1.10.1660.10">
    <property type="match status" value="1"/>
</dbReference>
<dbReference type="InterPro" id="IPR009061">
    <property type="entry name" value="DNA-bd_dom_put_sf"/>
</dbReference>
<dbReference type="InterPro" id="IPR000551">
    <property type="entry name" value="MerR-type_HTH_dom"/>
</dbReference>
<dbReference type="InterPro" id="IPR047057">
    <property type="entry name" value="MerR_fam"/>
</dbReference>
<dbReference type="PANTHER" id="PTHR30204:SF89">
    <property type="entry name" value="HTH MERR-TYPE DOMAIN-CONTAINING PROTEIN"/>
    <property type="match status" value="1"/>
</dbReference>
<dbReference type="PANTHER" id="PTHR30204">
    <property type="entry name" value="REDOX-CYCLING DRUG-SENSING TRANSCRIPTIONAL ACTIVATOR SOXR"/>
    <property type="match status" value="1"/>
</dbReference>
<dbReference type="Pfam" id="PF13411">
    <property type="entry name" value="MerR_1"/>
    <property type="match status" value="1"/>
</dbReference>
<dbReference type="SMART" id="SM00422">
    <property type="entry name" value="HTH_MERR"/>
    <property type="match status" value="1"/>
</dbReference>
<dbReference type="SUPFAM" id="SSF46955">
    <property type="entry name" value="Putative DNA-binding domain"/>
    <property type="match status" value="1"/>
</dbReference>
<dbReference type="PROSITE" id="PS50937">
    <property type="entry name" value="HTH_MERR_2"/>
    <property type="match status" value="1"/>
</dbReference>
<feature type="chain" id="PRO_0000098168" description="Uncharacterized HTH-type transcriptional regulator Rv1828">
    <location>
        <begin position="1"/>
        <end position="247"/>
    </location>
</feature>
<feature type="domain" description="HTH merR-type" evidence="1">
    <location>
        <begin position="11"/>
        <end position="85"/>
    </location>
</feature>
<feature type="DNA-binding region" description="H-T-H motif" evidence="1">
    <location>
        <begin position="14"/>
        <end position="38"/>
    </location>
</feature>
<feature type="helix" evidence="7">
    <location>
        <begin position="130"/>
        <end position="137"/>
    </location>
</feature>
<feature type="helix" evidence="7">
    <location>
        <begin position="141"/>
        <end position="149"/>
    </location>
</feature>
<feature type="strand" evidence="7">
    <location>
        <begin position="159"/>
        <end position="161"/>
    </location>
</feature>
<feature type="helix" evidence="7">
    <location>
        <begin position="163"/>
        <end position="177"/>
    </location>
</feature>
<feature type="helix" evidence="7">
    <location>
        <begin position="182"/>
        <end position="185"/>
    </location>
</feature>
<feature type="helix" evidence="7">
    <location>
        <begin position="186"/>
        <end position="203"/>
    </location>
</feature>
<feature type="helix" evidence="7">
    <location>
        <begin position="204"/>
        <end position="209"/>
    </location>
</feature>
<feature type="helix" evidence="7">
    <location>
        <begin position="220"/>
        <end position="244"/>
    </location>
</feature>
<accession>P9WME7</accession>
<accession>L0TAQ6</accession>
<accession>P67669</accession>
<accession>Q50605</accession>
<protein>
    <recommendedName>
        <fullName evidence="4">Uncharacterized HTH-type transcriptional regulator Rv1828</fullName>
    </recommendedName>
</protein>
<organism>
    <name type="scientific">Mycobacterium tuberculosis (strain ATCC 25618 / H37Rv)</name>
    <dbReference type="NCBI Taxonomy" id="83332"/>
    <lineage>
        <taxon>Bacteria</taxon>
        <taxon>Bacillati</taxon>
        <taxon>Actinomycetota</taxon>
        <taxon>Actinomycetes</taxon>
        <taxon>Mycobacteriales</taxon>
        <taxon>Mycobacteriaceae</taxon>
        <taxon>Mycobacterium</taxon>
        <taxon>Mycobacterium tuberculosis complex</taxon>
    </lineage>
</organism>
<proteinExistence type="evidence at protein level"/>
<name>Y1828_MYCTU</name>
<sequence>MSAPDSPALAGMSIGAVLDLLRPDFPDVTISKIRFLEAEGLVTPRRASSGYRRFTAYDCARLRFILTAQRDHYLPLKVIRAQLDAQPDGELPPFGSPYVLPRLVPVAGDSAGGVGSDTASVSLTGIRLSREDLLERSEVADELLTALLKAGVITTGPGGFFDEHAVVILQCARALAEYGVEPRHLRAFRSAADRQSDLIAQIAGPLVKAGKAGARDRADDLAREVAALAITLHTSLIKSAVRDVLHR</sequence>
<comment type="function">
    <text evidence="3">Transcriptional regulator that binds to its own promoter and thus may play a role in the regulation of the cotranscribed genes Rv1827 and Rv1828. Can also bind several promoter regions of genes that are essential, including ftsZ. Binds to the imperfect everted repeat sequence CTCAA through its winged-HTH motif.</text>
</comment>
<comment type="subunit">
    <text evidence="3">Homodimer.</text>
</comment>
<comment type="induction">
    <text evidence="3">Autoregulated.</text>
</comment>
<comment type="domain">
    <text evidence="3">Contains an N-terminal DNA-binding domain, a linker region and a C-terminal effector binding domain. Dimerization is mediated via the C-terminal domain.</text>
</comment>
<comment type="miscellaneous">
    <text evidence="2">Was identified as a high-confidence drug target.</text>
</comment>
<gene>
    <name type="ordered locus">Rv1828</name>
    <name type="ORF">MTCY1A11.15c</name>
</gene>